<evidence type="ECO:0000250" key="1">
    <source>
        <dbReference type="UniProtKB" id="Q9H7B2"/>
    </source>
</evidence>
<evidence type="ECO:0000255" key="2">
    <source>
        <dbReference type="PROSITE-ProRule" id="PRU00034"/>
    </source>
</evidence>
<evidence type="ECO:0000256" key="3">
    <source>
        <dbReference type="SAM" id="MobiDB-lite"/>
    </source>
</evidence>
<evidence type="ECO:0000305" key="4"/>
<sequence>MDALDKVLKPKTKRAKRFLEKREPKLTENIKNAMLIKGGNANATVTQVLRDMYALKKPYGVLYKKKNITRPFEDQTSLEFFSKKSDCSLFMFGSHNKKRPNNLVIGRMYDYHVLDMIELGIEKFVSLKDIKTSKCPEGTKPMLIFAGDDFDVTEDFRRLKNLLIDFFRGPTVSNVRLAGLEYVLHFTALNGKVYFRSYKLLLKKSGCRTPRIELEEMGPSLDLVMRRTHLASDDLYKLSMKVPKALKPKKRKNISQDTFGTTFGRIHMQKQDLSKLQTRKMKGLKKRPAENGVDDQGKKSKRIKKN</sequence>
<protein>
    <recommendedName>
        <fullName>Ribosome production factor 2 homolog</fullName>
    </recommendedName>
    <alternativeName>
        <fullName>Brix domain-containing protein 1</fullName>
    </alternativeName>
    <alternativeName>
        <fullName>Ribosome biogenesis protein RPF2 homolog</fullName>
    </alternativeName>
</protein>
<name>RPF2_MOUSE</name>
<organism>
    <name type="scientific">Mus musculus</name>
    <name type="common">Mouse</name>
    <dbReference type="NCBI Taxonomy" id="10090"/>
    <lineage>
        <taxon>Eukaryota</taxon>
        <taxon>Metazoa</taxon>
        <taxon>Chordata</taxon>
        <taxon>Craniata</taxon>
        <taxon>Vertebrata</taxon>
        <taxon>Euteleostomi</taxon>
        <taxon>Mammalia</taxon>
        <taxon>Eutheria</taxon>
        <taxon>Euarchontoglires</taxon>
        <taxon>Glires</taxon>
        <taxon>Rodentia</taxon>
        <taxon>Myomorpha</taxon>
        <taxon>Muroidea</taxon>
        <taxon>Muridae</taxon>
        <taxon>Murinae</taxon>
        <taxon>Mus</taxon>
        <taxon>Mus</taxon>
    </lineage>
</organism>
<dbReference type="EMBL" id="AB041810">
    <property type="protein sequence ID" value="BAA95117.1"/>
    <property type="molecule type" value="mRNA"/>
</dbReference>
<dbReference type="EMBL" id="AK010776">
    <property type="protein sequence ID" value="BAB27175.1"/>
    <property type="molecule type" value="mRNA"/>
</dbReference>
<dbReference type="EMBL" id="AK011644">
    <property type="status" value="NOT_ANNOTATED_CDS"/>
    <property type="molecule type" value="mRNA"/>
</dbReference>
<dbReference type="EMBL" id="AK012188">
    <property type="protein sequence ID" value="BAB28087.1"/>
    <property type="molecule type" value="mRNA"/>
</dbReference>
<dbReference type="EMBL" id="AK012641">
    <property type="protein sequence ID" value="BAB28375.1"/>
    <property type="molecule type" value="mRNA"/>
</dbReference>
<dbReference type="EMBL" id="AK013395">
    <property type="protein sequence ID" value="BAB28829.1"/>
    <property type="molecule type" value="mRNA"/>
</dbReference>
<dbReference type="EMBL" id="AK017678">
    <property type="protein sequence ID" value="BAB30868.1"/>
    <property type="molecule type" value="mRNA"/>
</dbReference>
<dbReference type="EMBL" id="AK020030">
    <property type="protein sequence ID" value="BAB31973.1"/>
    <property type="molecule type" value="mRNA"/>
</dbReference>
<dbReference type="CCDS" id="CCDS59543.1"/>
<dbReference type="RefSeq" id="NP_001036021.1">
    <property type="nucleotide sequence ID" value="NM_001042556.1"/>
</dbReference>
<dbReference type="RefSeq" id="NP_075812.3">
    <property type="nucleotide sequence ID" value="NM_023323.3"/>
</dbReference>
<dbReference type="SMR" id="Q9JJ80"/>
<dbReference type="BioGRID" id="212039">
    <property type="interactions" value="8"/>
</dbReference>
<dbReference type="CORUM" id="Q9JJ80"/>
<dbReference type="FunCoup" id="Q9JJ80">
    <property type="interactions" value="3128"/>
</dbReference>
<dbReference type="IntAct" id="Q9JJ80">
    <property type="interactions" value="2"/>
</dbReference>
<dbReference type="MINT" id="Q9JJ80"/>
<dbReference type="STRING" id="10090.ENSMUSP00000138581"/>
<dbReference type="GlyGen" id="Q9JJ80">
    <property type="glycosylation" value="1 site, 1 O-linked glycan (1 site)"/>
</dbReference>
<dbReference type="PhosphoSitePlus" id="Q9JJ80"/>
<dbReference type="jPOST" id="Q9JJ80"/>
<dbReference type="PaxDb" id="10090-ENSMUSP00000035456"/>
<dbReference type="PeptideAtlas" id="Q9JJ80"/>
<dbReference type="ProteomicsDB" id="260926"/>
<dbReference type="Pumba" id="Q9JJ80"/>
<dbReference type="Antibodypedia" id="19293">
    <property type="antibodies" value="168 antibodies from 26 providers"/>
</dbReference>
<dbReference type="DNASU" id="67239"/>
<dbReference type="Ensembl" id="ENSMUST00000183309.8">
    <property type="protein sequence ID" value="ENSMUSP00000138581.2"/>
    <property type="gene ID" value="ENSMUSG00000038510.13"/>
</dbReference>
<dbReference type="GeneID" id="67239"/>
<dbReference type="KEGG" id="mmu:67239"/>
<dbReference type="UCSC" id="uc007ewo.1">
    <property type="organism name" value="mouse"/>
</dbReference>
<dbReference type="AGR" id="MGI:1914489"/>
<dbReference type="CTD" id="84154"/>
<dbReference type="MGI" id="MGI:1914489">
    <property type="gene designation" value="Rpf2"/>
</dbReference>
<dbReference type="VEuPathDB" id="HostDB:ENSMUSG00000038510"/>
<dbReference type="eggNOG" id="KOG3031">
    <property type="taxonomic scope" value="Eukaryota"/>
</dbReference>
<dbReference type="GeneTree" id="ENSGT00390000007279"/>
<dbReference type="InParanoid" id="Q9JJ80"/>
<dbReference type="OMA" id="VGLKPMF"/>
<dbReference type="OrthoDB" id="407658at2759"/>
<dbReference type="PhylomeDB" id="Q9JJ80"/>
<dbReference type="BioGRID-ORCS" id="67239">
    <property type="hits" value="30 hits in 76 CRISPR screens"/>
</dbReference>
<dbReference type="ChiTaRS" id="Rpf2">
    <property type="organism name" value="mouse"/>
</dbReference>
<dbReference type="PRO" id="PR:Q9JJ80"/>
<dbReference type="Proteomes" id="UP000000589">
    <property type="component" value="Chromosome 10"/>
</dbReference>
<dbReference type="RNAct" id="Q9JJ80">
    <property type="molecule type" value="protein"/>
</dbReference>
<dbReference type="Bgee" id="ENSMUSG00000038510">
    <property type="expression patterns" value="Expressed in primitive streak and 255 other cell types or tissues"/>
</dbReference>
<dbReference type="ExpressionAtlas" id="Q9JJ80">
    <property type="expression patterns" value="baseline and differential"/>
</dbReference>
<dbReference type="GO" id="GO:0005694">
    <property type="term" value="C:chromosome"/>
    <property type="evidence" value="ECO:0007669"/>
    <property type="project" value="Ensembl"/>
</dbReference>
<dbReference type="GO" id="GO:0005730">
    <property type="term" value="C:nucleolus"/>
    <property type="evidence" value="ECO:0007669"/>
    <property type="project" value="UniProtKB-SubCell"/>
</dbReference>
<dbReference type="GO" id="GO:0005654">
    <property type="term" value="C:nucleoplasm"/>
    <property type="evidence" value="ECO:0007669"/>
    <property type="project" value="Ensembl"/>
</dbReference>
<dbReference type="GO" id="GO:0008097">
    <property type="term" value="F:5S rRNA binding"/>
    <property type="evidence" value="ECO:0000250"/>
    <property type="project" value="UniProtKB"/>
</dbReference>
<dbReference type="GO" id="GO:0000981">
    <property type="term" value="F:DNA-binding transcription factor activity, RNA polymerase II-specific"/>
    <property type="evidence" value="ECO:0000250"/>
    <property type="project" value="UniProtKB"/>
</dbReference>
<dbReference type="GO" id="GO:0000470">
    <property type="term" value="P:maturation of LSU-rRNA"/>
    <property type="evidence" value="ECO:0007669"/>
    <property type="project" value="InterPro"/>
</dbReference>
<dbReference type="GO" id="GO:1902570">
    <property type="term" value="P:protein localization to nucleolus"/>
    <property type="evidence" value="ECO:0000250"/>
    <property type="project" value="UniProtKB"/>
</dbReference>
<dbReference type="GO" id="GO:1901796">
    <property type="term" value="P:regulation of signal transduction by p53 class mediator"/>
    <property type="evidence" value="ECO:0000250"/>
    <property type="project" value="UniProtKB"/>
</dbReference>
<dbReference type="GO" id="GO:0000027">
    <property type="term" value="P:ribosomal large subunit assembly"/>
    <property type="evidence" value="ECO:0007669"/>
    <property type="project" value="InterPro"/>
</dbReference>
<dbReference type="GO" id="GO:0042273">
    <property type="term" value="P:ribosomal large subunit biogenesis"/>
    <property type="evidence" value="ECO:0000250"/>
    <property type="project" value="UniProtKB"/>
</dbReference>
<dbReference type="InterPro" id="IPR007109">
    <property type="entry name" value="Brix"/>
</dbReference>
<dbReference type="InterPro" id="IPR039770">
    <property type="entry name" value="Rpf2"/>
</dbReference>
<dbReference type="PANTHER" id="PTHR12728">
    <property type="entry name" value="BRIX DOMAIN CONTAINING PROTEIN"/>
    <property type="match status" value="1"/>
</dbReference>
<dbReference type="PANTHER" id="PTHR12728:SF0">
    <property type="entry name" value="RIBOSOME PRODUCTION FACTOR 2 HOMOLOG"/>
    <property type="match status" value="1"/>
</dbReference>
<dbReference type="Pfam" id="PF04427">
    <property type="entry name" value="Brix"/>
    <property type="match status" value="1"/>
</dbReference>
<dbReference type="SMART" id="SM00879">
    <property type="entry name" value="Brix"/>
    <property type="match status" value="1"/>
</dbReference>
<dbReference type="PROSITE" id="PS50833">
    <property type="entry name" value="BRIX"/>
    <property type="match status" value="1"/>
</dbReference>
<accession>Q9JJ80</accession>
<accession>Q8R3K6</accession>
<accession>Q9CQ34</accession>
<accession>Q9CSY9</accession>
<accession>Q9CYR9</accession>
<keyword id="KW-0539">Nucleus</keyword>
<keyword id="KW-1185">Reference proteome</keyword>
<keyword id="KW-0690">Ribosome biogenesis</keyword>
<comment type="function">
    <text evidence="1">Involved in ribosomal large subunit assembly. May regulate the localization of the 5S RNP/5S ribonucleoprotein particle to the nucleolus.</text>
</comment>
<comment type="subunit">
    <text evidence="1">Component of a hexameric 5S RNP precursor complex, composed of 5S RNA, RRS1, RPF2/BXDC1, RPL5, RPL11 and HEATR3; this complex acts as a precursor for ribosome assembly.</text>
</comment>
<comment type="subcellular location">
    <subcellularLocation>
        <location evidence="1">Nucleus</location>
        <location evidence="1">Nucleolus</location>
    </subcellularLocation>
    <text evidence="1">Associated with the nucleolus in an RNA-dependent manner.</text>
</comment>
<comment type="similarity">
    <text evidence="4">Belongs to the RPF2 family.</text>
</comment>
<reference key="1">
    <citation type="submission" date="2000-04" db="EMBL/GenBank/DDBJ databases">
        <title>Isolation of full-length cDNA clones from mouse brain cDNA library made by oligo-capping method.</title>
        <authorList>
            <person name="Osada N."/>
            <person name="Kusuda J."/>
            <person name="Tanuma R."/>
            <person name="Ito A."/>
            <person name="Hirata M."/>
            <person name="Sugano S."/>
            <person name="Hashimoto K."/>
        </authorList>
    </citation>
    <scope>NUCLEOTIDE SEQUENCE [LARGE SCALE MRNA]</scope>
    <source>
        <strain>C57BL/6J</strain>
        <tissue>Brain</tissue>
    </source>
</reference>
<reference key="2">
    <citation type="journal article" date="2005" name="Science">
        <title>The transcriptional landscape of the mammalian genome.</title>
        <authorList>
            <person name="Carninci P."/>
            <person name="Kasukawa T."/>
            <person name="Katayama S."/>
            <person name="Gough J."/>
            <person name="Frith M.C."/>
            <person name="Maeda N."/>
            <person name="Oyama R."/>
            <person name="Ravasi T."/>
            <person name="Lenhard B."/>
            <person name="Wells C."/>
            <person name="Kodzius R."/>
            <person name="Shimokawa K."/>
            <person name="Bajic V.B."/>
            <person name="Brenner S.E."/>
            <person name="Batalov S."/>
            <person name="Forrest A.R."/>
            <person name="Zavolan M."/>
            <person name="Davis M.J."/>
            <person name="Wilming L.G."/>
            <person name="Aidinis V."/>
            <person name="Allen J.E."/>
            <person name="Ambesi-Impiombato A."/>
            <person name="Apweiler R."/>
            <person name="Aturaliya R.N."/>
            <person name="Bailey T.L."/>
            <person name="Bansal M."/>
            <person name="Baxter L."/>
            <person name="Beisel K.W."/>
            <person name="Bersano T."/>
            <person name="Bono H."/>
            <person name="Chalk A.M."/>
            <person name="Chiu K.P."/>
            <person name="Choudhary V."/>
            <person name="Christoffels A."/>
            <person name="Clutterbuck D.R."/>
            <person name="Crowe M.L."/>
            <person name="Dalla E."/>
            <person name="Dalrymple B.P."/>
            <person name="de Bono B."/>
            <person name="Della Gatta G."/>
            <person name="di Bernardo D."/>
            <person name="Down T."/>
            <person name="Engstrom P."/>
            <person name="Fagiolini M."/>
            <person name="Faulkner G."/>
            <person name="Fletcher C.F."/>
            <person name="Fukushima T."/>
            <person name="Furuno M."/>
            <person name="Futaki S."/>
            <person name="Gariboldi M."/>
            <person name="Georgii-Hemming P."/>
            <person name="Gingeras T.R."/>
            <person name="Gojobori T."/>
            <person name="Green R.E."/>
            <person name="Gustincich S."/>
            <person name="Harbers M."/>
            <person name="Hayashi Y."/>
            <person name="Hensch T.K."/>
            <person name="Hirokawa N."/>
            <person name="Hill D."/>
            <person name="Huminiecki L."/>
            <person name="Iacono M."/>
            <person name="Ikeo K."/>
            <person name="Iwama A."/>
            <person name="Ishikawa T."/>
            <person name="Jakt M."/>
            <person name="Kanapin A."/>
            <person name="Katoh M."/>
            <person name="Kawasawa Y."/>
            <person name="Kelso J."/>
            <person name="Kitamura H."/>
            <person name="Kitano H."/>
            <person name="Kollias G."/>
            <person name="Krishnan S.P."/>
            <person name="Kruger A."/>
            <person name="Kummerfeld S.K."/>
            <person name="Kurochkin I.V."/>
            <person name="Lareau L.F."/>
            <person name="Lazarevic D."/>
            <person name="Lipovich L."/>
            <person name="Liu J."/>
            <person name="Liuni S."/>
            <person name="McWilliam S."/>
            <person name="Madan Babu M."/>
            <person name="Madera M."/>
            <person name="Marchionni L."/>
            <person name="Matsuda H."/>
            <person name="Matsuzawa S."/>
            <person name="Miki H."/>
            <person name="Mignone F."/>
            <person name="Miyake S."/>
            <person name="Morris K."/>
            <person name="Mottagui-Tabar S."/>
            <person name="Mulder N."/>
            <person name="Nakano N."/>
            <person name="Nakauchi H."/>
            <person name="Ng P."/>
            <person name="Nilsson R."/>
            <person name="Nishiguchi S."/>
            <person name="Nishikawa S."/>
            <person name="Nori F."/>
            <person name="Ohara O."/>
            <person name="Okazaki Y."/>
            <person name="Orlando V."/>
            <person name="Pang K.C."/>
            <person name="Pavan W.J."/>
            <person name="Pavesi G."/>
            <person name="Pesole G."/>
            <person name="Petrovsky N."/>
            <person name="Piazza S."/>
            <person name="Reed J."/>
            <person name="Reid J.F."/>
            <person name="Ring B.Z."/>
            <person name="Ringwald M."/>
            <person name="Rost B."/>
            <person name="Ruan Y."/>
            <person name="Salzberg S.L."/>
            <person name="Sandelin A."/>
            <person name="Schneider C."/>
            <person name="Schoenbach C."/>
            <person name="Sekiguchi K."/>
            <person name="Semple C.A."/>
            <person name="Seno S."/>
            <person name="Sessa L."/>
            <person name="Sheng Y."/>
            <person name="Shibata Y."/>
            <person name="Shimada H."/>
            <person name="Shimada K."/>
            <person name="Silva D."/>
            <person name="Sinclair B."/>
            <person name="Sperling S."/>
            <person name="Stupka E."/>
            <person name="Sugiura K."/>
            <person name="Sultana R."/>
            <person name="Takenaka Y."/>
            <person name="Taki K."/>
            <person name="Tammoja K."/>
            <person name="Tan S.L."/>
            <person name="Tang S."/>
            <person name="Taylor M.S."/>
            <person name="Tegner J."/>
            <person name="Teichmann S.A."/>
            <person name="Ueda H.R."/>
            <person name="van Nimwegen E."/>
            <person name="Verardo R."/>
            <person name="Wei C.L."/>
            <person name="Yagi K."/>
            <person name="Yamanishi H."/>
            <person name="Zabarovsky E."/>
            <person name="Zhu S."/>
            <person name="Zimmer A."/>
            <person name="Hide W."/>
            <person name="Bult C."/>
            <person name="Grimmond S.M."/>
            <person name="Teasdale R.D."/>
            <person name="Liu E.T."/>
            <person name="Brusic V."/>
            <person name="Quackenbush J."/>
            <person name="Wahlestedt C."/>
            <person name="Mattick J.S."/>
            <person name="Hume D.A."/>
            <person name="Kai C."/>
            <person name="Sasaki D."/>
            <person name="Tomaru Y."/>
            <person name="Fukuda S."/>
            <person name="Kanamori-Katayama M."/>
            <person name="Suzuki M."/>
            <person name="Aoki J."/>
            <person name="Arakawa T."/>
            <person name="Iida J."/>
            <person name="Imamura K."/>
            <person name="Itoh M."/>
            <person name="Kato T."/>
            <person name="Kawaji H."/>
            <person name="Kawagashira N."/>
            <person name="Kawashima T."/>
            <person name="Kojima M."/>
            <person name="Kondo S."/>
            <person name="Konno H."/>
            <person name="Nakano K."/>
            <person name="Ninomiya N."/>
            <person name="Nishio T."/>
            <person name="Okada M."/>
            <person name="Plessy C."/>
            <person name="Shibata K."/>
            <person name="Shiraki T."/>
            <person name="Suzuki S."/>
            <person name="Tagami M."/>
            <person name="Waki K."/>
            <person name="Watahiki A."/>
            <person name="Okamura-Oho Y."/>
            <person name="Suzuki H."/>
            <person name="Kawai J."/>
            <person name="Hayashizaki Y."/>
        </authorList>
    </citation>
    <scope>NUCLEOTIDE SEQUENCE [LARGE SCALE MRNA]</scope>
    <source>
        <strain>C57BL/6J</strain>
        <tissue>Embryo</tissue>
    </source>
</reference>
<feature type="chain" id="PRO_0000120224" description="Ribosome production factor 2 homolog">
    <location>
        <begin position="1"/>
        <end position="306"/>
    </location>
</feature>
<feature type="domain" description="Brix" evidence="2">
    <location>
        <begin position="31"/>
        <end position="234"/>
    </location>
</feature>
<feature type="region of interest" description="Disordered" evidence="3">
    <location>
        <begin position="270"/>
        <end position="306"/>
    </location>
</feature>
<feature type="compositionally biased region" description="Basic residues" evidence="3">
    <location>
        <begin position="277"/>
        <end position="286"/>
    </location>
</feature>
<feature type="sequence conflict" description="In Ref. 1; BAA95117." evidence="4" ref="1">
    <original>L</original>
    <variation>R</variation>
    <location>
        <position position="8"/>
    </location>
</feature>
<feature type="sequence conflict" description="In Ref. 2; BAB28829." evidence="4" ref="2">
    <original>E</original>
    <variation>G</variation>
    <location>
        <position position="79"/>
    </location>
</feature>
<gene>
    <name type="primary">Rpf2</name>
    <name type="synonym">Bxdc1</name>
    <name type="ORF">MNCb-4285</name>
</gene>
<proteinExistence type="evidence at transcript level"/>